<dbReference type="EC" id="2.7.7.7"/>
<dbReference type="EMBL" id="AF083464">
    <property type="protein sequence ID" value="AAC98785.1"/>
    <property type="molecule type" value="mRNA"/>
</dbReference>
<dbReference type="EMBL" id="AB031049">
    <property type="protein sequence ID" value="BAA90768.1"/>
    <property type="molecule type" value="mRNA"/>
</dbReference>
<dbReference type="EMBL" id="AC118733">
    <property type="status" value="NOT_ANNOTATED_CDS"/>
    <property type="molecule type" value="Genomic_DNA"/>
</dbReference>
<dbReference type="EMBL" id="AC119943">
    <property type="status" value="NOT_ANNOTATED_CDS"/>
    <property type="molecule type" value="Genomic_DNA"/>
</dbReference>
<dbReference type="EMBL" id="D78644">
    <property type="protein sequence ID" value="BAA11461.1"/>
    <property type="molecule type" value="mRNA"/>
</dbReference>
<dbReference type="CCDS" id="CCDS23790.1"/>
<dbReference type="PIR" id="T17202">
    <property type="entry name" value="T17202"/>
</dbReference>
<dbReference type="RefSeq" id="NP_035394.2">
    <property type="nucleotide sequence ID" value="NM_011264.3"/>
</dbReference>
<dbReference type="PDB" id="4FJO">
    <property type="method" value="X-ray"/>
    <property type="resolution" value="2.72 A"/>
    <property type="chains" value="D=1865-1894"/>
</dbReference>
<dbReference type="PDBsum" id="4FJO"/>
<dbReference type="SMR" id="Q61493"/>
<dbReference type="BioGRID" id="202866">
    <property type="interactions" value="6"/>
</dbReference>
<dbReference type="FunCoup" id="Q61493">
    <property type="interactions" value="3131"/>
</dbReference>
<dbReference type="STRING" id="10090.ENSMUSP00000019986"/>
<dbReference type="GlyGen" id="Q61493">
    <property type="glycosylation" value="3 sites"/>
</dbReference>
<dbReference type="iPTMnet" id="Q61493"/>
<dbReference type="PhosphoSitePlus" id="Q61493"/>
<dbReference type="jPOST" id="Q61493"/>
<dbReference type="PaxDb" id="10090-ENSMUSP00000019986"/>
<dbReference type="PeptideAtlas" id="Q61493"/>
<dbReference type="ProteomicsDB" id="253225"/>
<dbReference type="Antibodypedia" id="32376">
    <property type="antibodies" value="99 antibodies from 23 providers"/>
</dbReference>
<dbReference type="DNASU" id="19714"/>
<dbReference type="Ensembl" id="ENSMUST00000019986.13">
    <property type="protein sequence ID" value="ENSMUSP00000019986.7"/>
    <property type="gene ID" value="ENSMUSG00000019841.17"/>
</dbReference>
<dbReference type="GeneID" id="19714"/>
<dbReference type="KEGG" id="mmu:19714"/>
<dbReference type="UCSC" id="uc007ewc.1">
    <property type="organism name" value="mouse"/>
</dbReference>
<dbReference type="AGR" id="MGI:1337131"/>
<dbReference type="CTD" id="5980"/>
<dbReference type="MGI" id="MGI:1337131">
    <property type="gene designation" value="Rev3l"/>
</dbReference>
<dbReference type="VEuPathDB" id="HostDB:ENSMUSG00000019841"/>
<dbReference type="eggNOG" id="KOG0968">
    <property type="taxonomic scope" value="Eukaryota"/>
</dbReference>
<dbReference type="GeneTree" id="ENSGT00940000156226"/>
<dbReference type="HOGENOM" id="CLU_000203_1_0_1"/>
<dbReference type="InParanoid" id="Q61493"/>
<dbReference type="OMA" id="DPTSWIR"/>
<dbReference type="OrthoDB" id="2414538at2759"/>
<dbReference type="PhylomeDB" id="Q61493"/>
<dbReference type="TreeFam" id="TF101072"/>
<dbReference type="Reactome" id="R-MMU-110312">
    <property type="pathway name" value="Translesion synthesis by REV1"/>
</dbReference>
<dbReference type="Reactome" id="R-MMU-5655862">
    <property type="pathway name" value="Translesion synthesis by POLK"/>
</dbReference>
<dbReference type="Reactome" id="R-MMU-5656121">
    <property type="pathway name" value="Translesion synthesis by POLI"/>
</dbReference>
<dbReference type="BioGRID-ORCS" id="19714">
    <property type="hits" value="17 hits in 112 CRISPR screens"/>
</dbReference>
<dbReference type="ChiTaRS" id="Rev3l">
    <property type="organism name" value="mouse"/>
</dbReference>
<dbReference type="PRO" id="PR:Q61493"/>
<dbReference type="Proteomes" id="UP000000589">
    <property type="component" value="Chromosome 10"/>
</dbReference>
<dbReference type="RNAct" id="Q61493">
    <property type="molecule type" value="protein"/>
</dbReference>
<dbReference type="Bgee" id="ENSMUSG00000019841">
    <property type="expression patterns" value="Expressed in ciliary body and 265 other cell types or tissues"/>
</dbReference>
<dbReference type="ExpressionAtlas" id="Q61493">
    <property type="expression patterns" value="baseline and differential"/>
</dbReference>
<dbReference type="GO" id="GO:0005730">
    <property type="term" value="C:nucleolus"/>
    <property type="evidence" value="ECO:0000314"/>
    <property type="project" value="MGI"/>
</dbReference>
<dbReference type="GO" id="GO:0016035">
    <property type="term" value="C:zeta DNA polymerase complex"/>
    <property type="evidence" value="ECO:0000250"/>
    <property type="project" value="UniProtKB"/>
</dbReference>
<dbReference type="GO" id="GO:0051539">
    <property type="term" value="F:4 iron, 4 sulfur cluster binding"/>
    <property type="evidence" value="ECO:0007669"/>
    <property type="project" value="UniProtKB-KW"/>
</dbReference>
<dbReference type="GO" id="GO:0003677">
    <property type="term" value="F:DNA binding"/>
    <property type="evidence" value="ECO:0007669"/>
    <property type="project" value="UniProtKB-KW"/>
</dbReference>
<dbReference type="GO" id="GO:0003887">
    <property type="term" value="F:DNA-directed DNA polymerase activity"/>
    <property type="evidence" value="ECO:0007669"/>
    <property type="project" value="UniProtKB-KW"/>
</dbReference>
<dbReference type="GO" id="GO:0000166">
    <property type="term" value="F:nucleotide binding"/>
    <property type="evidence" value="ECO:0007669"/>
    <property type="project" value="InterPro"/>
</dbReference>
<dbReference type="GO" id="GO:0008270">
    <property type="term" value="F:zinc ion binding"/>
    <property type="evidence" value="ECO:0007669"/>
    <property type="project" value="UniProtKB-KW"/>
</dbReference>
<dbReference type="GO" id="GO:0006281">
    <property type="term" value="P:DNA repair"/>
    <property type="evidence" value="ECO:0000315"/>
    <property type="project" value="MGI"/>
</dbReference>
<dbReference type="GO" id="GO:0006260">
    <property type="term" value="P:DNA replication"/>
    <property type="evidence" value="ECO:0007669"/>
    <property type="project" value="UniProtKB-KW"/>
</dbReference>
<dbReference type="GO" id="GO:0042276">
    <property type="term" value="P:error-prone translesion synthesis"/>
    <property type="evidence" value="ECO:0007669"/>
    <property type="project" value="Ensembl"/>
</dbReference>
<dbReference type="CDD" id="cd05778">
    <property type="entry name" value="DNA_polB_zeta_exo"/>
    <property type="match status" value="1"/>
</dbReference>
<dbReference type="CDD" id="cd05534">
    <property type="entry name" value="POLBc_zeta"/>
    <property type="match status" value="1"/>
</dbReference>
<dbReference type="CDD" id="cd22287">
    <property type="entry name" value="REV3L_RBD"/>
    <property type="match status" value="1"/>
</dbReference>
<dbReference type="FunFam" id="1.10.287.690:FF:000002">
    <property type="entry name" value="DNA polymerase zeta"/>
    <property type="match status" value="1"/>
</dbReference>
<dbReference type="FunFam" id="3.30.420.10:FF:000024">
    <property type="entry name" value="DNA polymerase zeta catalytic subunit"/>
    <property type="match status" value="1"/>
</dbReference>
<dbReference type="FunFam" id="3.30.342.10:FF:000002">
    <property type="entry name" value="DNA polymerase zeta catalytic subunit isoform X1"/>
    <property type="match status" value="1"/>
</dbReference>
<dbReference type="FunFam" id="1.10.132.60:FF:000005">
    <property type="entry name" value="Putative DNA polymerase zeta catalytic subunit"/>
    <property type="match status" value="1"/>
</dbReference>
<dbReference type="Gene3D" id="1.10.132.60">
    <property type="entry name" value="DNA polymerase family B, C-terminal domain"/>
    <property type="match status" value="1"/>
</dbReference>
<dbReference type="Gene3D" id="3.30.342.10">
    <property type="entry name" value="DNA Polymerase, chain B, domain 1"/>
    <property type="match status" value="1"/>
</dbReference>
<dbReference type="Gene3D" id="1.10.287.690">
    <property type="entry name" value="Helix hairpin bin"/>
    <property type="match status" value="1"/>
</dbReference>
<dbReference type="Gene3D" id="3.90.1600.10">
    <property type="entry name" value="Palm domain of DNA polymerase"/>
    <property type="match status" value="1"/>
</dbReference>
<dbReference type="Gene3D" id="3.30.420.10">
    <property type="entry name" value="Ribonuclease H-like superfamily/Ribonuclease H"/>
    <property type="match status" value="1"/>
</dbReference>
<dbReference type="InterPro" id="IPR006172">
    <property type="entry name" value="DNA-dir_DNA_pol_B"/>
</dbReference>
<dbReference type="InterPro" id="IPR017964">
    <property type="entry name" value="DNA-dir_DNA_pol_B_CS"/>
</dbReference>
<dbReference type="InterPro" id="IPR006133">
    <property type="entry name" value="DNA-dir_DNA_pol_B_exonuc"/>
</dbReference>
<dbReference type="InterPro" id="IPR006134">
    <property type="entry name" value="DNA-dir_DNA_pol_B_multi_dom"/>
</dbReference>
<dbReference type="InterPro" id="IPR043502">
    <property type="entry name" value="DNA/RNA_pol_sf"/>
</dbReference>
<dbReference type="InterPro" id="IPR042087">
    <property type="entry name" value="DNA_pol_B_thumb"/>
</dbReference>
<dbReference type="InterPro" id="IPR023211">
    <property type="entry name" value="DNA_pol_palm_dom_sf"/>
</dbReference>
<dbReference type="InterPro" id="IPR056435">
    <property type="entry name" value="DPOD/Z_N"/>
</dbReference>
<dbReference type="InterPro" id="IPR032757">
    <property type="entry name" value="DUF4683"/>
</dbReference>
<dbReference type="InterPro" id="IPR030559">
    <property type="entry name" value="PolZ_Rev3"/>
</dbReference>
<dbReference type="InterPro" id="IPR056447">
    <property type="entry name" value="REV3_N"/>
</dbReference>
<dbReference type="InterPro" id="IPR012337">
    <property type="entry name" value="RNaseH-like_sf"/>
</dbReference>
<dbReference type="InterPro" id="IPR036397">
    <property type="entry name" value="RNaseH_sf"/>
</dbReference>
<dbReference type="InterPro" id="IPR025687">
    <property type="entry name" value="Znf-C4pol"/>
</dbReference>
<dbReference type="PANTHER" id="PTHR45812">
    <property type="entry name" value="DNA POLYMERASE ZETA CATALYTIC SUBUNIT"/>
    <property type="match status" value="1"/>
</dbReference>
<dbReference type="PANTHER" id="PTHR45812:SF1">
    <property type="entry name" value="DNA POLYMERASE ZETA CATALYTIC SUBUNIT"/>
    <property type="match status" value="1"/>
</dbReference>
<dbReference type="Pfam" id="PF00136">
    <property type="entry name" value="DNA_pol_B"/>
    <property type="match status" value="1"/>
</dbReference>
<dbReference type="Pfam" id="PF03104">
    <property type="entry name" value="DNA_pol_B_exo1"/>
    <property type="match status" value="1"/>
</dbReference>
<dbReference type="Pfam" id="PF15735">
    <property type="entry name" value="DUF4683"/>
    <property type="match status" value="1"/>
</dbReference>
<dbReference type="Pfam" id="PF24055">
    <property type="entry name" value="POL3_N"/>
    <property type="match status" value="1"/>
</dbReference>
<dbReference type="Pfam" id="PF24065">
    <property type="entry name" value="REV3_N"/>
    <property type="match status" value="1"/>
</dbReference>
<dbReference type="Pfam" id="PF14260">
    <property type="entry name" value="zf-C4pol"/>
    <property type="match status" value="1"/>
</dbReference>
<dbReference type="PRINTS" id="PR00106">
    <property type="entry name" value="DNAPOLB"/>
</dbReference>
<dbReference type="SMART" id="SM00486">
    <property type="entry name" value="POLBc"/>
    <property type="match status" value="1"/>
</dbReference>
<dbReference type="SUPFAM" id="SSF56672">
    <property type="entry name" value="DNA/RNA polymerases"/>
    <property type="match status" value="1"/>
</dbReference>
<dbReference type="SUPFAM" id="SSF53098">
    <property type="entry name" value="Ribonuclease H-like"/>
    <property type="match status" value="1"/>
</dbReference>
<dbReference type="PROSITE" id="PS00116">
    <property type="entry name" value="DNA_POLYMERASE_B"/>
    <property type="match status" value="1"/>
</dbReference>
<keyword id="KW-0002">3D-structure</keyword>
<keyword id="KW-0004">4Fe-4S</keyword>
<keyword id="KW-0227">DNA damage</keyword>
<keyword id="KW-0234">DNA repair</keyword>
<keyword id="KW-0235">DNA replication</keyword>
<keyword id="KW-0238">DNA-binding</keyword>
<keyword id="KW-0239">DNA-directed DNA polymerase</keyword>
<keyword id="KW-0408">Iron</keyword>
<keyword id="KW-0411">Iron-sulfur</keyword>
<keyword id="KW-0479">Metal-binding</keyword>
<keyword id="KW-0548">Nucleotidyltransferase</keyword>
<keyword id="KW-0539">Nucleus</keyword>
<keyword id="KW-0597">Phosphoprotein</keyword>
<keyword id="KW-1185">Reference proteome</keyword>
<keyword id="KW-0808">Transferase</keyword>
<keyword id="KW-0862">Zinc</keyword>
<keyword id="KW-0863">Zinc-finger</keyword>
<name>REV3L_MOUSE</name>
<protein>
    <recommendedName>
        <fullName>DNA polymerase zeta catalytic subunit</fullName>
        <ecNumber>2.7.7.7</ecNumber>
    </recommendedName>
    <alternativeName>
        <fullName>Protein reversionless 3-like</fullName>
        <shortName>REV3-like</shortName>
    </alternativeName>
    <alternativeName>
        <fullName>Seizure-related protein 4</fullName>
    </alternativeName>
</protein>
<feature type="chain" id="PRO_0000046469" description="DNA polymerase zeta catalytic subunit">
    <location>
        <begin position="1"/>
        <end position="3122"/>
    </location>
</feature>
<feature type="zinc finger region" description="CysA-type">
    <location>
        <begin position="3034"/>
        <end position="3049"/>
    </location>
</feature>
<feature type="region of interest" description="Disordered" evidence="5">
    <location>
        <begin position="270"/>
        <end position="289"/>
    </location>
</feature>
<feature type="region of interest" description="Disordered" evidence="5">
    <location>
        <begin position="425"/>
        <end position="457"/>
    </location>
</feature>
<feature type="region of interest" description="Disordered" evidence="5">
    <location>
        <begin position="487"/>
        <end position="509"/>
    </location>
</feature>
<feature type="region of interest" description="Disordered" evidence="5">
    <location>
        <begin position="524"/>
        <end position="545"/>
    </location>
</feature>
<feature type="region of interest" description="Disordered" evidence="5">
    <location>
        <begin position="842"/>
        <end position="886"/>
    </location>
</feature>
<feature type="region of interest" description="Disordered" evidence="5">
    <location>
        <begin position="1034"/>
        <end position="1075"/>
    </location>
</feature>
<feature type="region of interest" description="Disordered" evidence="5">
    <location>
        <begin position="1154"/>
        <end position="1285"/>
    </location>
</feature>
<feature type="region of interest" description="Disordered" evidence="5">
    <location>
        <begin position="1429"/>
        <end position="1453"/>
    </location>
</feature>
<feature type="region of interest" description="Disordered" evidence="5">
    <location>
        <begin position="1538"/>
        <end position="1616"/>
    </location>
</feature>
<feature type="region of interest" description="Disordered" evidence="5">
    <location>
        <begin position="1842"/>
        <end position="1869"/>
    </location>
</feature>
<feature type="region of interest" description="Mediates interaction with MAD2L2" evidence="1">
    <location>
        <begin position="1844"/>
        <end position="1895"/>
    </location>
</feature>
<feature type="region of interest" description="Disordered" evidence="5">
    <location>
        <begin position="1959"/>
        <end position="1979"/>
    </location>
</feature>
<feature type="region of interest" description="Disordered" evidence="5">
    <location>
        <begin position="2091"/>
        <end position="2138"/>
    </location>
</feature>
<feature type="short sequence motif" description="CysB motif">
    <location>
        <begin position="3078"/>
        <end position="3096"/>
    </location>
</feature>
<feature type="compositionally biased region" description="Polar residues" evidence="5">
    <location>
        <begin position="277"/>
        <end position="286"/>
    </location>
</feature>
<feature type="compositionally biased region" description="Acidic residues" evidence="5">
    <location>
        <begin position="497"/>
        <end position="509"/>
    </location>
</feature>
<feature type="compositionally biased region" description="Polar residues" evidence="5">
    <location>
        <begin position="533"/>
        <end position="545"/>
    </location>
</feature>
<feature type="compositionally biased region" description="Polar residues" evidence="5">
    <location>
        <begin position="842"/>
        <end position="860"/>
    </location>
</feature>
<feature type="compositionally biased region" description="Basic residues" evidence="5">
    <location>
        <begin position="1042"/>
        <end position="1063"/>
    </location>
</feature>
<feature type="compositionally biased region" description="Basic residues" evidence="5">
    <location>
        <begin position="1166"/>
        <end position="1179"/>
    </location>
</feature>
<feature type="compositionally biased region" description="Basic and acidic residues" evidence="5">
    <location>
        <begin position="1215"/>
        <end position="1239"/>
    </location>
</feature>
<feature type="compositionally biased region" description="Polar residues" evidence="5">
    <location>
        <begin position="1243"/>
        <end position="1270"/>
    </location>
</feature>
<feature type="compositionally biased region" description="Low complexity" evidence="5">
    <location>
        <begin position="1429"/>
        <end position="1440"/>
    </location>
</feature>
<feature type="compositionally biased region" description="Polar residues" evidence="5">
    <location>
        <begin position="1441"/>
        <end position="1453"/>
    </location>
</feature>
<feature type="compositionally biased region" description="Polar residues" evidence="5">
    <location>
        <begin position="1538"/>
        <end position="1561"/>
    </location>
</feature>
<feature type="compositionally biased region" description="Basic residues" evidence="5">
    <location>
        <begin position="1566"/>
        <end position="1587"/>
    </location>
</feature>
<feature type="compositionally biased region" description="Basic and acidic residues" evidence="5">
    <location>
        <begin position="1588"/>
        <end position="1598"/>
    </location>
</feature>
<feature type="compositionally biased region" description="Polar residues" evidence="5">
    <location>
        <begin position="1602"/>
        <end position="1615"/>
    </location>
</feature>
<feature type="compositionally biased region" description="Low complexity" evidence="5">
    <location>
        <begin position="1846"/>
        <end position="1859"/>
    </location>
</feature>
<feature type="compositionally biased region" description="Polar residues" evidence="5">
    <location>
        <begin position="1860"/>
        <end position="1869"/>
    </location>
</feature>
<feature type="binding site" evidence="4">
    <location>
        <position position="3034"/>
    </location>
    <ligand>
        <name>Zn(2+)</name>
        <dbReference type="ChEBI" id="CHEBI:29105"/>
    </ligand>
</feature>
<feature type="binding site" evidence="4">
    <location>
        <position position="3037"/>
    </location>
    <ligand>
        <name>Zn(2+)</name>
        <dbReference type="ChEBI" id="CHEBI:29105"/>
    </ligand>
</feature>
<feature type="binding site" evidence="4">
    <location>
        <position position="3046"/>
    </location>
    <ligand>
        <name>Zn(2+)</name>
        <dbReference type="ChEBI" id="CHEBI:29105"/>
    </ligand>
</feature>
<feature type="binding site" evidence="4">
    <location>
        <position position="3049"/>
    </location>
    <ligand>
        <name>Zn(2+)</name>
        <dbReference type="ChEBI" id="CHEBI:29105"/>
    </ligand>
</feature>
<feature type="binding site" evidence="4">
    <location>
        <position position="3078"/>
    </location>
    <ligand>
        <name>[4Fe-4S] cluster</name>
        <dbReference type="ChEBI" id="CHEBI:49883"/>
    </ligand>
</feature>
<feature type="binding site" evidence="4">
    <location>
        <position position="3081"/>
    </location>
    <ligand>
        <name>[4Fe-4S] cluster</name>
        <dbReference type="ChEBI" id="CHEBI:49883"/>
    </ligand>
</feature>
<feature type="binding site" evidence="4">
    <location>
        <position position="3091"/>
    </location>
    <ligand>
        <name>[4Fe-4S] cluster</name>
        <dbReference type="ChEBI" id="CHEBI:49883"/>
    </ligand>
</feature>
<feature type="binding site" evidence="4">
    <location>
        <position position="3096"/>
    </location>
    <ligand>
        <name>[4Fe-4S] cluster</name>
        <dbReference type="ChEBI" id="CHEBI:49883"/>
    </ligand>
</feature>
<feature type="modified residue" description="Phosphoserine" evidence="7">
    <location>
        <position position="1029"/>
    </location>
</feature>
<feature type="modified residue" description="Phosphothreonine" evidence="7">
    <location>
        <position position="1040"/>
    </location>
</feature>
<feature type="modified residue" description="Phosphoserine" evidence="2">
    <location>
        <position position="1964"/>
    </location>
</feature>
<feature type="sequence conflict" description="In Ref. 2; BAA90768." evidence="6" ref="2">
    <original>G</original>
    <variation>A</variation>
    <location>
        <position position="92"/>
    </location>
</feature>
<feature type="sequence conflict" description="In Ref. 2; BAA90768." evidence="6" ref="2">
    <original>A</original>
    <variation>T</variation>
    <location>
        <position position="294"/>
    </location>
</feature>
<feature type="sequence conflict" description="In Ref. 1; AAC98785." evidence="6" ref="1">
    <original>Q</original>
    <variation>E</variation>
    <location>
        <position position="578"/>
    </location>
</feature>
<feature type="sequence conflict" description="In Ref. 2; BAA90768." evidence="6" ref="2">
    <original>R</original>
    <variation>Q</variation>
    <location>
        <position position="609"/>
    </location>
</feature>
<feature type="sequence conflict" description="In Ref. 1; AAC98785." evidence="6" ref="1">
    <original>P</original>
    <variation>L</variation>
    <location>
        <position position="1278"/>
    </location>
</feature>
<feature type="sequence conflict" description="In Ref. 1; AAC98785." evidence="6" ref="1">
    <original>F</original>
    <variation>L</variation>
    <location>
        <position position="1298"/>
    </location>
</feature>
<feature type="sequence conflict" description="In Ref. 2; BAA90768." evidence="6" ref="2">
    <original>P</original>
    <variation>L</variation>
    <location>
        <position position="1416"/>
    </location>
</feature>
<feature type="sequence conflict" description="In Ref. 1; AAC98785." evidence="6" ref="1">
    <original>T</original>
    <variation>A</variation>
    <location>
        <position position="1848"/>
    </location>
</feature>
<feature type="sequence conflict" description="In Ref. 4; BAA11461." evidence="6" ref="4">
    <original>V</original>
    <variation>G</variation>
    <location>
        <position position="2368"/>
    </location>
</feature>
<feature type="sequence conflict" description="In Ref. 1; AAC98785, 2; BAA90768 and 4; BAA11461." evidence="6" ref="1 2 4">
    <original>A</original>
    <variation>G</variation>
    <location>
        <position position="2467"/>
    </location>
</feature>
<feature type="sequence conflict" description="In Ref. 1; AAC98785, 2; BAA90768 and 4; BAA11461." evidence="6" ref="1 2 4">
    <original>Q</original>
    <variation>H</variation>
    <location>
        <position position="2883"/>
    </location>
</feature>
<feature type="helix" evidence="8">
    <location>
        <begin position="1870"/>
        <end position="1873"/>
    </location>
</feature>
<feature type="strand" evidence="8">
    <location>
        <begin position="1874"/>
        <end position="1879"/>
    </location>
</feature>
<feature type="helix" evidence="8">
    <location>
        <begin position="1884"/>
        <end position="1890"/>
    </location>
</feature>
<feature type="helix" evidence="8">
    <location>
        <begin position="1891"/>
        <end position="1893"/>
    </location>
</feature>
<proteinExistence type="evidence at protein level"/>
<comment type="function">
    <text evidence="2">Catalytic subunit of the DNA polymerase zeta complex, an error-prone polymerase specialized in translesion DNA synthesis (TLS). Lacks an intrinsic 3'-5' exonuclease activity and thus has no proofreading function.</text>
</comment>
<comment type="catalytic activity">
    <reaction>
        <text>DNA(n) + a 2'-deoxyribonucleoside 5'-triphosphate = DNA(n+1) + diphosphate</text>
        <dbReference type="Rhea" id="RHEA:22508"/>
        <dbReference type="Rhea" id="RHEA-COMP:17339"/>
        <dbReference type="Rhea" id="RHEA-COMP:17340"/>
        <dbReference type="ChEBI" id="CHEBI:33019"/>
        <dbReference type="ChEBI" id="CHEBI:61560"/>
        <dbReference type="ChEBI" id="CHEBI:173112"/>
        <dbReference type="EC" id="2.7.7.7"/>
    </reaction>
</comment>
<comment type="cofactor">
    <cofactor evidence="3">
        <name>[4Fe-4S] cluster</name>
        <dbReference type="ChEBI" id="CHEBI:49883"/>
    </cofactor>
    <text evidence="3">Binds 1 [4Fe-4S] cluster.</text>
</comment>
<comment type="subunit">
    <text evidence="2">Heterodimer with MAD2L2. This dimer forms the minimal DNA polymerase zeta complex (Pol-zeta2), with REV3L bearing DNA polymerase catalytic activity, although its activity is very low in this context. Component of the tetrameric Pol-zeta complex (Pol-zeta4), which consists of REV3L, MAD2L2, POLD2 and POLD3; Pol-zeta4 is the fully active form of DNA polymerase zeta.</text>
</comment>
<comment type="subcellular location">
    <subcellularLocation>
        <location evidence="6">Nucleus</location>
    </subcellularLocation>
</comment>
<comment type="domain">
    <text evidence="1">The CysB motif binds 1 4Fe-4S cluster and is required for the formation of polymerase complexes.</text>
</comment>
<comment type="similarity">
    <text evidence="6">Belongs to the DNA polymerase type-B family.</text>
</comment>
<reference key="1">
    <citation type="journal article" date="1999" name="Mutat. Res.">
        <title>Molecular cloning, expression and chromosomal localisation of the mouse Rev3l gene, encoding the catalytic subunit of polymerase zeta.</title>
        <authorList>
            <person name="van Sloun P.P.H."/>
            <person name="Romeijn R.J."/>
            <person name="Eeken J.C.J."/>
        </authorList>
    </citation>
    <scope>NUCLEOTIDE SEQUENCE [MRNA]</scope>
    <source>
        <strain>129/Ola</strain>
        <tissue>Testis</tissue>
    </source>
</reference>
<reference key="2">
    <citation type="submission" date="1999-08" db="EMBL/GenBank/DDBJ databases">
        <title>Molecular analyses of Sez4 encoding murine homologue of yeast REV3 in brain neurons.</title>
        <authorList>
            <person name="Kajiwara K."/>
        </authorList>
    </citation>
    <scope>NUCLEOTIDE SEQUENCE [MRNA]</scope>
</reference>
<reference key="3">
    <citation type="journal article" date="2009" name="PLoS Biol.">
        <title>Lineage-specific biology revealed by a finished genome assembly of the mouse.</title>
        <authorList>
            <person name="Church D.M."/>
            <person name="Goodstadt L."/>
            <person name="Hillier L.W."/>
            <person name="Zody M.C."/>
            <person name="Goldstein S."/>
            <person name="She X."/>
            <person name="Bult C.J."/>
            <person name="Agarwala R."/>
            <person name="Cherry J.L."/>
            <person name="DiCuccio M."/>
            <person name="Hlavina W."/>
            <person name="Kapustin Y."/>
            <person name="Meric P."/>
            <person name="Maglott D."/>
            <person name="Birtle Z."/>
            <person name="Marques A.C."/>
            <person name="Graves T."/>
            <person name="Zhou S."/>
            <person name="Teague B."/>
            <person name="Potamousis K."/>
            <person name="Churas C."/>
            <person name="Place M."/>
            <person name="Herschleb J."/>
            <person name="Runnheim R."/>
            <person name="Forrest D."/>
            <person name="Amos-Landgraf J."/>
            <person name="Schwartz D.C."/>
            <person name="Cheng Z."/>
            <person name="Lindblad-Toh K."/>
            <person name="Eichler E.E."/>
            <person name="Ponting C.P."/>
        </authorList>
    </citation>
    <scope>NUCLEOTIDE SEQUENCE [LARGE SCALE GENOMIC DNA]</scope>
    <source>
        <strain>C57BL/6J</strain>
    </source>
</reference>
<reference key="4">
    <citation type="journal article" date="1996" name="Biochem. Biophys. Res. Commun.">
        <title>Molecular characterization of seizure-related genes isolated by differential screening.</title>
        <authorList>
            <person name="Kajiwara K."/>
            <person name="Nagawawa H."/>
            <person name="Shimizu-Nishikawa K."/>
            <person name="Ookura T."/>
            <person name="Kimura M."/>
            <person name="Sugaya E."/>
        </authorList>
    </citation>
    <scope>NUCLEOTIDE SEQUENCE [MRNA] OF 2368-3122</scope>
    <source>
        <strain>C57BL/6J</strain>
        <tissue>Embryonic brain</tissue>
    </source>
</reference>
<reference key="5">
    <citation type="journal article" date="2010" name="Cell">
        <title>A tissue-specific atlas of mouse protein phosphorylation and expression.</title>
        <authorList>
            <person name="Huttlin E.L."/>
            <person name="Jedrychowski M.P."/>
            <person name="Elias J.E."/>
            <person name="Goswami T."/>
            <person name="Rad R."/>
            <person name="Beausoleil S.A."/>
            <person name="Villen J."/>
            <person name="Haas W."/>
            <person name="Sowa M.E."/>
            <person name="Gygi S.P."/>
        </authorList>
    </citation>
    <scope>PHOSPHORYLATION [LARGE SCALE ANALYSIS] AT SER-1029 AND THR-1040</scope>
    <scope>IDENTIFICATION BY MASS SPECTROMETRY [LARGE SCALE ANALYSIS]</scope>
    <source>
        <tissue>Testis</tissue>
    </source>
</reference>
<gene>
    <name type="primary">Rev3l</name>
    <name type="synonym">Polz</name>
    <name type="synonym">Sez4</name>
</gene>
<evidence type="ECO:0000250" key="1"/>
<evidence type="ECO:0000250" key="2">
    <source>
        <dbReference type="UniProtKB" id="O60673"/>
    </source>
</evidence>
<evidence type="ECO:0000250" key="3">
    <source>
        <dbReference type="UniProtKB" id="P14284"/>
    </source>
</evidence>
<evidence type="ECO:0000250" key="4">
    <source>
        <dbReference type="UniProtKB" id="P15436"/>
    </source>
</evidence>
<evidence type="ECO:0000256" key="5">
    <source>
        <dbReference type="SAM" id="MobiDB-lite"/>
    </source>
</evidence>
<evidence type="ECO:0000305" key="6"/>
<evidence type="ECO:0007744" key="7">
    <source>
    </source>
</evidence>
<evidence type="ECO:0007829" key="8">
    <source>
        <dbReference type="PDB" id="4FJO"/>
    </source>
</evidence>
<organism>
    <name type="scientific">Mus musculus</name>
    <name type="common">Mouse</name>
    <dbReference type="NCBI Taxonomy" id="10090"/>
    <lineage>
        <taxon>Eukaryota</taxon>
        <taxon>Metazoa</taxon>
        <taxon>Chordata</taxon>
        <taxon>Craniata</taxon>
        <taxon>Vertebrata</taxon>
        <taxon>Euteleostomi</taxon>
        <taxon>Mammalia</taxon>
        <taxon>Eutheria</taxon>
        <taxon>Euarchontoglires</taxon>
        <taxon>Glires</taxon>
        <taxon>Rodentia</taxon>
        <taxon>Myomorpha</taxon>
        <taxon>Muroidea</taxon>
        <taxon>Muridae</taxon>
        <taxon>Murinae</taxon>
        <taxon>Mus</taxon>
        <taxon>Mus</taxon>
    </lineage>
</organism>
<sequence length="3122" mass="350711">MFSVRIVTADYYMASPLPGLDTCQSPLTQLPVKKVPVVRVFGATPAGQKTCLHLHGIFPYLYVPYDGYGQQPESYLSQMAFSIDRALNVALGNPSSTAQHVFKVSLVSGMPFYGYHEKERHFMKIYLYNPAMVKRICELLQSGAIMNKCYQPHEAHIPYLLQLFIDYNLYGMNLINLAAVKFRKARRKGNASHATGLFKHQLSGNSPAGTLFRWEEDEIPSSLLLEGVEPLSTCELEVDAVAADILNRLDIEAQIGGNPGLQAIWEDEKQRRRNRNESSQISQPESQDCRFVPATESEKQFQKRLQEVLKQNDFSVTLSGSVDYSNGSQEFSAELTLHSEILSPEMLPCSPANMIEVHKDTDLSKGNTKHKVEEALINEEAILNLIENSQTFQPLTQRLSETPVFMGSSPDESLVHLLAGLESDGYQGEKNRMPLPCHSFGESQNPQNSDDEENEPQIEKEEMELSVVMSQRWDSDIEEHCAKKRSLCRNAHRSSTEEDDSSSEEEMEWTDNSLLFANLSIPQLDGTADENSDNPLNNENSRAHSSVIATSKLSVRPSIFHKDAATLEPPSSAKITFQCKHTSALSSHVLNKDGLTEDLSQPNSTEKGRDNSVTFTKESTYSMKYSGSLSSTVHSDNSHKEICKKDKSLPVSSCESSVFDYEEDIPSVTRQVPSRKYSNMRKIEKDASCIHVNRHISETILGKNSFNFADLNHSKRKLSSEGNEKGNSTSLSGVFPSSLTENCDLLPSSGENRSMAHSLESITDESGLNKLKIRYEEFQEHKMEKPSLSQQAAHYMFFPSVVLSNCLTRPQKLSPVTYKLQSGNKPSRLKLNKKKLIGLQETSTKSTETGATKDSCTHNDLYTGASEKENGLSSDSAKATHGTFENKPPTEHFIDCHFGDGSLEAEQSFGLYGNKYTLRAKRKVNYETEDSESSFVTQNSKISLPHPMEIGENLDGTLKSRKRRKMSKKLPPVIIKYIIINRFRGRKNMLVKLGKIDSKEKQVILTEEKMELYKKLAPLKDFWPKVPDSPATKYPIYPLTPKKSHRRKSKHKSAKKKPGKQHRTNSENIKRTLSFRKKRTHAVLSPPSPSYIAETEDCDLSYSDVMSKLGFLSERSTSPINSSPPRCWSPTDPRAEEIMAAAEKESMLFKGPNVYNTKTVSPRVGKASRARAQVKKSKARLANSSVVTNKRNKRNQTTKLVDDGKKKPRAKQKQRANEKSLSRKHAIPADEKMKPHSEAELTPNHQSVSELTSSSGAQALSKQKEMSQTGPAVDHPLPPAQPTGISAQQRLSNCFSSFLESKKSVDLRTFPSSRDDSHSSVVYSSIGPGISKINIQRSHNQSAMFTRKETTLIQKSIFDLSNHLSQVAQSTQVCSGIISPKTEESSSTQKNCGSSMGKLNEYRSSLESKPEQVCAPNFLHCKDSQQQTVSVSEQSKTSETCSPGNAASEESQTPNCFVTSLKSPIKQIAWEQKQRGFILDMSNFKPEKVKQRSLSEAISQTKALSQCKNQNVSTPSVFGEGQSGLAVLKELLQKRQQKAQSTNVVQDSTSTHQPDKNISVSNEHKKANKRTRPVTSPRKPRTPRRTKPKEQTPRRLKVDPLNLQTSGHLDNSLSDDSPILFSDPGFESCYSLEDSLSPEHNYNFDINTIGQTGFCSFYSGSQFVPADQNLPQKFLSDAVQDLFPGQAIDKSELLSHDRQSCSEEKHHVSDSSPWIRASTLNPELFEKVAMDNNENHRHSQWKNSFHPLTSHSNSIMESFCVQQAENCLTEKSRLNRSSVSKEVFLSLPQANSSDWIQGHNRKEADQSLHSANTSFTTILSSPDGELVDAASEDLELYVSRNNDVLTPTPDSSPRSTSSPLQSKNGSFTPRTAHILKPLMSPPSREEIVATLLDHDLSEAIYQEPFCSNPSDVPEKPREIGGRLLMVETRLPNDLIEFEGDFSLEGLRLWKTAFSAMTQNPRPGSPLRNGQAVVNKESSNSHKMVEDKKIVIMPCKYAPSRQLVQAWLQAKEEYERSKKLPKTELTPVTKSAENVSPSLNPGDTCAVSPQVDKCPHTLSSSAHTKEEVSKSQIALQTSTTGCSQTLLAAASAAVPEEDEDDNDNCYVSYSSPDSPGIPPWQQAASPDFRSLNGDDRHSSPGKELCSLAVENFLKPIKDGIQKSSCSESWEPQVISPIHARARTGKWDPLCLHSTPVMQRKFLEKLPEATGLSPLSVEPKTQKLYNKKGSDADGLRRVLLTTQVENQFAAVNTPKKETSQIDGPSLNNTYGFKVSIQNLQEAKALHEIQNLTLISVELHARTRRDLQPDPEFDPICALFYCISSDTPLPDTEKTELTGVIVIDKDKTVTHQDIRSQTPLLIRSGITGLEVTYAADEKALFQEITNIIKRYDPDILLGYEIQMHSWGYLLQRAAALSVDLCQMISRVPDDKIENRFAAERDDYGSDTMSEINIVGRITLNLWRIMRNEVALTNYTFENVSFHVLHQRFPLFTFRVLSDWFDNKTDLYRWKMVDHYVSRVRGNLQMLEQLDLIGKTSEMARLFGIQFLHVLTRGSQYRVESMMLRIAKPMNYIPVTPSIQQRSQMRAPQCVPLIMEPESRFYSNSVLVLDFQSLYPSIVIAYNYCFSTCLGHVENLGKYDEFKFGCTSLRVPPDLLYQIRHDVTVSPNGVAFVKPSVRKGVLPRMLEEILKTRLMVKQSMKSYKQDRALSRMLNARQLGLKLIANVTFGYTAANFSGRMPCIEVGDSIVHKARETLERAIKLVNDTKKWGARVVYGDTDSMFVLLKGATKEQSFKIGQEIAEAVTATNPRPVKLKFEKVYLPCVLQTKKRYVGYMYETLDQKEPVFDAKGIETVRRDSCPAVSKILERSLKLLFETRDISLIKQYVQRQCMKLVEGKASIQDFIFAKEYRGSFSYRPGACVPALELTRKMLAYDRRSEPRVGERVPYVIIYGTPGLPLIQLIRRPAEVLQDPTLRLNATYYITKQILPPLARIFSLIGIDVFSWYQELPRIQKATSSSRSELEGRKGTISQYFTTLHCPVCDDLTQHGICSKCRSQPQHVAIILNQEIRELERKQEQLIKICRNCTGSFDRHIPCVSLNCPVLFKLSRVNRELSKAPYLRQLLDQF</sequence>
<accession>Q61493</accession>
<accession>E9Q1X0</accession>
<accession>Q9JMD6</accession>
<accession>Q9QWX6</accession>